<keyword id="KW-0963">Cytoplasm</keyword>
<keyword id="KW-0274">FAD</keyword>
<keyword id="KW-0285">Flavoprotein</keyword>
<keyword id="KW-0489">Methyltransferase</keyword>
<keyword id="KW-0520">NAD</keyword>
<keyword id="KW-0521">NADP</keyword>
<keyword id="KW-0808">Transferase</keyword>
<keyword id="KW-0819">tRNA processing</keyword>
<accession>Q07MJ4</accession>
<feature type="chain" id="PRO_1000063924" description="Methylenetetrahydrofolate--tRNA-(uracil-5-)-methyltransferase TrmFO">
    <location>
        <begin position="1"/>
        <end position="476"/>
    </location>
</feature>
<feature type="region of interest" description="Disordered" evidence="2">
    <location>
        <begin position="428"/>
        <end position="447"/>
    </location>
</feature>
<feature type="compositionally biased region" description="Basic and acidic residues" evidence="2">
    <location>
        <begin position="436"/>
        <end position="447"/>
    </location>
</feature>
<feature type="binding site" evidence="1">
    <location>
        <begin position="14"/>
        <end position="19"/>
    </location>
    <ligand>
        <name>FAD</name>
        <dbReference type="ChEBI" id="CHEBI:57692"/>
    </ligand>
</feature>
<reference key="1">
    <citation type="submission" date="2006-09" db="EMBL/GenBank/DDBJ databases">
        <title>Complete sequence of Rhodopseudomonas palustris BisA53.</title>
        <authorList>
            <consortium name="US DOE Joint Genome Institute"/>
            <person name="Copeland A."/>
            <person name="Lucas S."/>
            <person name="Lapidus A."/>
            <person name="Barry K."/>
            <person name="Detter J.C."/>
            <person name="Glavina del Rio T."/>
            <person name="Hammon N."/>
            <person name="Israni S."/>
            <person name="Dalin E."/>
            <person name="Tice H."/>
            <person name="Pitluck S."/>
            <person name="Chain P."/>
            <person name="Malfatti S."/>
            <person name="Shin M."/>
            <person name="Vergez L."/>
            <person name="Schmutz J."/>
            <person name="Larimer F."/>
            <person name="Land M."/>
            <person name="Hauser L."/>
            <person name="Pelletier D.A."/>
            <person name="Kyrpides N."/>
            <person name="Kim E."/>
            <person name="Harwood C.S."/>
            <person name="Oda Y."/>
            <person name="Richardson P."/>
        </authorList>
    </citation>
    <scope>NUCLEOTIDE SEQUENCE [LARGE SCALE GENOMIC DNA]</scope>
    <source>
        <strain>BisA53</strain>
    </source>
</reference>
<gene>
    <name evidence="1" type="primary">trmFO</name>
    <name type="synonym">gid</name>
    <name type="ordered locus">RPE_2903</name>
</gene>
<proteinExistence type="inferred from homology"/>
<organism>
    <name type="scientific">Rhodopseudomonas palustris (strain BisA53)</name>
    <dbReference type="NCBI Taxonomy" id="316055"/>
    <lineage>
        <taxon>Bacteria</taxon>
        <taxon>Pseudomonadati</taxon>
        <taxon>Pseudomonadota</taxon>
        <taxon>Alphaproteobacteria</taxon>
        <taxon>Hyphomicrobiales</taxon>
        <taxon>Nitrobacteraceae</taxon>
        <taxon>Rhodopseudomonas</taxon>
    </lineage>
</organism>
<dbReference type="EC" id="2.1.1.74" evidence="1"/>
<dbReference type="EMBL" id="CP000463">
    <property type="protein sequence ID" value="ABJ06840.1"/>
    <property type="molecule type" value="Genomic_DNA"/>
</dbReference>
<dbReference type="SMR" id="Q07MJ4"/>
<dbReference type="STRING" id="316055.RPE_2903"/>
<dbReference type="KEGG" id="rpe:RPE_2903"/>
<dbReference type="eggNOG" id="COG1206">
    <property type="taxonomic scope" value="Bacteria"/>
</dbReference>
<dbReference type="HOGENOM" id="CLU_033057_1_0_5"/>
<dbReference type="OrthoDB" id="9803114at2"/>
<dbReference type="GO" id="GO:0005829">
    <property type="term" value="C:cytosol"/>
    <property type="evidence" value="ECO:0007669"/>
    <property type="project" value="TreeGrafter"/>
</dbReference>
<dbReference type="GO" id="GO:0050660">
    <property type="term" value="F:flavin adenine dinucleotide binding"/>
    <property type="evidence" value="ECO:0007669"/>
    <property type="project" value="UniProtKB-UniRule"/>
</dbReference>
<dbReference type="GO" id="GO:0047151">
    <property type="term" value="F:tRNA (uracil(54)-C5)-methyltransferase activity, 5,10-methylenetetrahydrofolate-dependent"/>
    <property type="evidence" value="ECO:0007669"/>
    <property type="project" value="UniProtKB-UniRule"/>
</dbReference>
<dbReference type="GO" id="GO:0030488">
    <property type="term" value="P:tRNA methylation"/>
    <property type="evidence" value="ECO:0007669"/>
    <property type="project" value="TreeGrafter"/>
</dbReference>
<dbReference type="GO" id="GO:0002098">
    <property type="term" value="P:tRNA wobble uridine modification"/>
    <property type="evidence" value="ECO:0007669"/>
    <property type="project" value="TreeGrafter"/>
</dbReference>
<dbReference type="Gene3D" id="3.50.50.60">
    <property type="entry name" value="FAD/NAD(P)-binding domain"/>
    <property type="match status" value="2"/>
</dbReference>
<dbReference type="HAMAP" id="MF_01037">
    <property type="entry name" value="TrmFO"/>
    <property type="match status" value="1"/>
</dbReference>
<dbReference type="InterPro" id="IPR036188">
    <property type="entry name" value="FAD/NAD-bd_sf"/>
</dbReference>
<dbReference type="InterPro" id="IPR002218">
    <property type="entry name" value="MnmG-rel"/>
</dbReference>
<dbReference type="InterPro" id="IPR040131">
    <property type="entry name" value="MnmG_N"/>
</dbReference>
<dbReference type="InterPro" id="IPR004417">
    <property type="entry name" value="TrmFO"/>
</dbReference>
<dbReference type="NCBIfam" id="TIGR00137">
    <property type="entry name" value="gid_trmFO"/>
    <property type="match status" value="1"/>
</dbReference>
<dbReference type="NCBIfam" id="NF003739">
    <property type="entry name" value="PRK05335.1"/>
    <property type="match status" value="1"/>
</dbReference>
<dbReference type="PANTHER" id="PTHR11806">
    <property type="entry name" value="GLUCOSE INHIBITED DIVISION PROTEIN A"/>
    <property type="match status" value="1"/>
</dbReference>
<dbReference type="PANTHER" id="PTHR11806:SF2">
    <property type="entry name" value="METHYLENETETRAHYDROFOLATE--TRNA-(URACIL-5-)-METHYLTRANSFERASE TRMFO"/>
    <property type="match status" value="1"/>
</dbReference>
<dbReference type="Pfam" id="PF01134">
    <property type="entry name" value="GIDA"/>
    <property type="match status" value="1"/>
</dbReference>
<dbReference type="SUPFAM" id="SSF51905">
    <property type="entry name" value="FAD/NAD(P)-binding domain"/>
    <property type="match status" value="1"/>
</dbReference>
<evidence type="ECO:0000255" key="1">
    <source>
        <dbReference type="HAMAP-Rule" id="MF_01037"/>
    </source>
</evidence>
<evidence type="ECO:0000256" key="2">
    <source>
        <dbReference type="SAM" id="MobiDB-lite"/>
    </source>
</evidence>
<protein>
    <recommendedName>
        <fullName evidence="1">Methylenetetrahydrofolate--tRNA-(uracil-5-)-methyltransferase TrmFO</fullName>
        <ecNumber evidence="1">2.1.1.74</ecNumber>
    </recommendedName>
    <alternativeName>
        <fullName evidence="1">Folate-dependent tRNA (uracil-5-)-methyltransferase</fullName>
    </alternativeName>
    <alternativeName>
        <fullName evidence="1">Folate-dependent tRNA(M-5-U54)-methyltransferase</fullName>
    </alternativeName>
</protein>
<sequence length="476" mass="50896">MTSISIDQPIHVIGGGLAGSEAAWQIAQAGIRVVLHEMRPIRMTEAHRSDSLAELVCSNSFRSDDAANNAVGLLHAEMRRLNSLVMRAADANQVPAGGALAVDRDGFAAAVTRALAEHPLIEIRRGEVDGLPPADWSNVVISTGPLTSAPLAAAIQALTGEDSLSFFDAIAPIVHRDSIDMTKAWFQSRYDKVGPGGTGADYLNCPMTREQYDGFVAALVAGDKVDFKDWEKDTPYFDGCLPIEVMAERGPETLRYGPMKPVGLTNPHNPTVKPYGIVQLRQDNKLGTLYNMVGFQTKLKHGEQARIFRTIPGLENADFARLGGLHRNTFLNSPKLLDSQLRLRAEPRLRFAGQMTGCEGYVESAGIGLIAGLCAAADAVGRALTPPPPTTALGALLGHITGGHIETIDAGPRSFQPMNINFGLFPPLTEPPTHGADGKKLRGPEKSVAKKQALSARALADLDRWIADAVRVAAAA</sequence>
<comment type="function">
    <text evidence="1">Catalyzes the folate-dependent formation of 5-methyl-uridine at position 54 (M-5-U54) in all tRNAs.</text>
</comment>
<comment type="catalytic activity">
    <reaction evidence="1">
        <text>uridine(54) in tRNA + (6R)-5,10-methylene-5,6,7,8-tetrahydrofolate + NADH + H(+) = 5-methyluridine(54) in tRNA + (6S)-5,6,7,8-tetrahydrofolate + NAD(+)</text>
        <dbReference type="Rhea" id="RHEA:16873"/>
        <dbReference type="Rhea" id="RHEA-COMP:10167"/>
        <dbReference type="Rhea" id="RHEA-COMP:10193"/>
        <dbReference type="ChEBI" id="CHEBI:15378"/>
        <dbReference type="ChEBI" id="CHEBI:15636"/>
        <dbReference type="ChEBI" id="CHEBI:57453"/>
        <dbReference type="ChEBI" id="CHEBI:57540"/>
        <dbReference type="ChEBI" id="CHEBI:57945"/>
        <dbReference type="ChEBI" id="CHEBI:65315"/>
        <dbReference type="ChEBI" id="CHEBI:74447"/>
        <dbReference type="EC" id="2.1.1.74"/>
    </reaction>
</comment>
<comment type="catalytic activity">
    <reaction evidence="1">
        <text>uridine(54) in tRNA + (6R)-5,10-methylene-5,6,7,8-tetrahydrofolate + NADPH + H(+) = 5-methyluridine(54) in tRNA + (6S)-5,6,7,8-tetrahydrofolate + NADP(+)</text>
        <dbReference type="Rhea" id="RHEA:62372"/>
        <dbReference type="Rhea" id="RHEA-COMP:10167"/>
        <dbReference type="Rhea" id="RHEA-COMP:10193"/>
        <dbReference type="ChEBI" id="CHEBI:15378"/>
        <dbReference type="ChEBI" id="CHEBI:15636"/>
        <dbReference type="ChEBI" id="CHEBI:57453"/>
        <dbReference type="ChEBI" id="CHEBI:57783"/>
        <dbReference type="ChEBI" id="CHEBI:58349"/>
        <dbReference type="ChEBI" id="CHEBI:65315"/>
        <dbReference type="ChEBI" id="CHEBI:74447"/>
        <dbReference type="EC" id="2.1.1.74"/>
    </reaction>
</comment>
<comment type="cofactor">
    <cofactor evidence="1">
        <name>FAD</name>
        <dbReference type="ChEBI" id="CHEBI:57692"/>
    </cofactor>
</comment>
<comment type="subcellular location">
    <subcellularLocation>
        <location evidence="1">Cytoplasm</location>
    </subcellularLocation>
</comment>
<comment type="similarity">
    <text evidence="1">Belongs to the MnmG family. TrmFO subfamily.</text>
</comment>
<name>TRMFO_RHOP5</name>